<name>DXR_NOSP7</name>
<keyword id="KW-0414">Isoprene biosynthesis</keyword>
<keyword id="KW-0464">Manganese</keyword>
<keyword id="KW-0479">Metal-binding</keyword>
<keyword id="KW-0521">NADP</keyword>
<keyword id="KW-0560">Oxidoreductase</keyword>
<keyword id="KW-1185">Reference proteome</keyword>
<organism>
    <name type="scientific">Nostoc punctiforme (strain ATCC 29133 / PCC 73102)</name>
    <dbReference type="NCBI Taxonomy" id="63737"/>
    <lineage>
        <taxon>Bacteria</taxon>
        <taxon>Bacillati</taxon>
        <taxon>Cyanobacteriota</taxon>
        <taxon>Cyanophyceae</taxon>
        <taxon>Nostocales</taxon>
        <taxon>Nostocaceae</taxon>
        <taxon>Nostoc</taxon>
    </lineage>
</organism>
<sequence length="398" mass="43472">MKAITLVGSTGSIGTQTLDIVTQYPDQFRIVGLAAGNNVEMLAAQIRQFRPKIAAICSEDKLPALKEAIIDLDPQPILLAGEAGVIEVARYGDAQTVVTGIVGCAGLLPTIAAIEAGKDIALANKETLIAGAPVVLPLVEKHGVKLLPADSEHSAIFQCLQGVPKSGLRKILLTASGGAFRDWDVERLADVTVADALKHPNWSMGRKITVDSATLMNKGLEVIEAHFLFGLDYDNIEIVIHPQSIIHSLIELQDTSVLAQLGWPDMRLPLLYALSWPDRIYTDWERLDLVKAGNLTFREPDHQKYPCMQLAYAVGKAGGSMPAVLNAANEQAVALFLDEKIRFLDIPRCIEWVCDRHQNDNRANPSLDDILAADKWARQEVLTATEKLETPSRIISLR</sequence>
<feature type="chain" id="PRO_1000124104" description="1-deoxy-D-xylulose 5-phosphate reductoisomerase">
    <location>
        <begin position="1"/>
        <end position="398"/>
    </location>
</feature>
<feature type="binding site" evidence="1">
    <location>
        <position position="10"/>
    </location>
    <ligand>
        <name>NADPH</name>
        <dbReference type="ChEBI" id="CHEBI:57783"/>
    </ligand>
</feature>
<feature type="binding site" evidence="1">
    <location>
        <position position="11"/>
    </location>
    <ligand>
        <name>NADPH</name>
        <dbReference type="ChEBI" id="CHEBI:57783"/>
    </ligand>
</feature>
<feature type="binding site" evidence="1">
    <location>
        <position position="12"/>
    </location>
    <ligand>
        <name>NADPH</name>
        <dbReference type="ChEBI" id="CHEBI:57783"/>
    </ligand>
</feature>
<feature type="binding site" evidence="1">
    <location>
        <position position="13"/>
    </location>
    <ligand>
        <name>NADPH</name>
        <dbReference type="ChEBI" id="CHEBI:57783"/>
    </ligand>
</feature>
<feature type="binding site" evidence="1">
    <location>
        <position position="36"/>
    </location>
    <ligand>
        <name>NADPH</name>
        <dbReference type="ChEBI" id="CHEBI:57783"/>
    </ligand>
</feature>
<feature type="binding site" evidence="1">
    <location>
        <position position="38"/>
    </location>
    <ligand>
        <name>NADPH</name>
        <dbReference type="ChEBI" id="CHEBI:57783"/>
    </ligand>
</feature>
<feature type="binding site" evidence="1">
    <location>
        <position position="124"/>
    </location>
    <ligand>
        <name>NADPH</name>
        <dbReference type="ChEBI" id="CHEBI:57783"/>
    </ligand>
</feature>
<feature type="binding site" evidence="1">
    <location>
        <position position="125"/>
    </location>
    <ligand>
        <name>1-deoxy-D-xylulose 5-phosphate</name>
        <dbReference type="ChEBI" id="CHEBI:57792"/>
    </ligand>
</feature>
<feature type="binding site" evidence="1">
    <location>
        <position position="126"/>
    </location>
    <ligand>
        <name>NADPH</name>
        <dbReference type="ChEBI" id="CHEBI:57783"/>
    </ligand>
</feature>
<feature type="binding site" evidence="1">
    <location>
        <position position="150"/>
    </location>
    <ligand>
        <name>Mn(2+)</name>
        <dbReference type="ChEBI" id="CHEBI:29035"/>
    </ligand>
</feature>
<feature type="binding site" evidence="1">
    <location>
        <position position="151"/>
    </location>
    <ligand>
        <name>1-deoxy-D-xylulose 5-phosphate</name>
        <dbReference type="ChEBI" id="CHEBI:57792"/>
    </ligand>
</feature>
<feature type="binding site" evidence="1">
    <location>
        <position position="152"/>
    </location>
    <ligand>
        <name>1-deoxy-D-xylulose 5-phosphate</name>
        <dbReference type="ChEBI" id="CHEBI:57792"/>
    </ligand>
</feature>
<feature type="binding site" evidence="1">
    <location>
        <position position="152"/>
    </location>
    <ligand>
        <name>Mn(2+)</name>
        <dbReference type="ChEBI" id="CHEBI:29035"/>
    </ligand>
</feature>
<feature type="binding site" evidence="1">
    <location>
        <position position="176"/>
    </location>
    <ligand>
        <name>1-deoxy-D-xylulose 5-phosphate</name>
        <dbReference type="ChEBI" id="CHEBI:57792"/>
    </ligand>
</feature>
<feature type="binding site" evidence="1">
    <location>
        <position position="199"/>
    </location>
    <ligand>
        <name>1-deoxy-D-xylulose 5-phosphate</name>
        <dbReference type="ChEBI" id="CHEBI:57792"/>
    </ligand>
</feature>
<feature type="binding site" evidence="1">
    <location>
        <position position="205"/>
    </location>
    <ligand>
        <name>NADPH</name>
        <dbReference type="ChEBI" id="CHEBI:57783"/>
    </ligand>
</feature>
<feature type="binding site" evidence="1">
    <location>
        <position position="212"/>
    </location>
    <ligand>
        <name>1-deoxy-D-xylulose 5-phosphate</name>
        <dbReference type="ChEBI" id="CHEBI:57792"/>
    </ligand>
</feature>
<feature type="binding site" evidence="1">
    <location>
        <position position="217"/>
    </location>
    <ligand>
        <name>1-deoxy-D-xylulose 5-phosphate</name>
        <dbReference type="ChEBI" id="CHEBI:57792"/>
    </ligand>
</feature>
<feature type="binding site" evidence="1">
    <location>
        <position position="218"/>
    </location>
    <ligand>
        <name>1-deoxy-D-xylulose 5-phosphate</name>
        <dbReference type="ChEBI" id="CHEBI:57792"/>
    </ligand>
</feature>
<feature type="binding site" evidence="1">
    <location>
        <position position="221"/>
    </location>
    <ligand>
        <name>1-deoxy-D-xylulose 5-phosphate</name>
        <dbReference type="ChEBI" id="CHEBI:57792"/>
    </ligand>
</feature>
<feature type="binding site" evidence="1">
    <location>
        <position position="221"/>
    </location>
    <ligand>
        <name>Mn(2+)</name>
        <dbReference type="ChEBI" id="CHEBI:29035"/>
    </ligand>
</feature>
<proteinExistence type="inferred from homology"/>
<accession>B2ITX3</accession>
<evidence type="ECO:0000255" key="1">
    <source>
        <dbReference type="HAMAP-Rule" id="MF_00183"/>
    </source>
</evidence>
<dbReference type="EC" id="1.1.1.267" evidence="1"/>
<dbReference type="EMBL" id="CP001037">
    <property type="protein sequence ID" value="ACC84261.1"/>
    <property type="molecule type" value="Genomic_DNA"/>
</dbReference>
<dbReference type="RefSeq" id="WP_012412204.1">
    <property type="nucleotide sequence ID" value="NC_010628.1"/>
</dbReference>
<dbReference type="SMR" id="B2ITX3"/>
<dbReference type="STRING" id="63737.Npun_R5970"/>
<dbReference type="EnsemblBacteria" id="ACC84261">
    <property type="protein sequence ID" value="ACC84261"/>
    <property type="gene ID" value="Npun_R5970"/>
</dbReference>
<dbReference type="KEGG" id="npu:Npun_R5970"/>
<dbReference type="eggNOG" id="COG0743">
    <property type="taxonomic scope" value="Bacteria"/>
</dbReference>
<dbReference type="HOGENOM" id="CLU_035714_4_0_3"/>
<dbReference type="OrthoDB" id="9806546at2"/>
<dbReference type="PhylomeDB" id="B2ITX3"/>
<dbReference type="UniPathway" id="UPA00056">
    <property type="reaction ID" value="UER00092"/>
</dbReference>
<dbReference type="Proteomes" id="UP000001191">
    <property type="component" value="Chromosome"/>
</dbReference>
<dbReference type="GO" id="GO:0030604">
    <property type="term" value="F:1-deoxy-D-xylulose-5-phosphate reductoisomerase activity"/>
    <property type="evidence" value="ECO:0007669"/>
    <property type="project" value="UniProtKB-UniRule"/>
</dbReference>
<dbReference type="GO" id="GO:0030145">
    <property type="term" value="F:manganese ion binding"/>
    <property type="evidence" value="ECO:0007669"/>
    <property type="project" value="TreeGrafter"/>
</dbReference>
<dbReference type="GO" id="GO:0070402">
    <property type="term" value="F:NADPH binding"/>
    <property type="evidence" value="ECO:0007669"/>
    <property type="project" value="InterPro"/>
</dbReference>
<dbReference type="GO" id="GO:0051484">
    <property type="term" value="P:isopentenyl diphosphate biosynthetic process, methylerythritol 4-phosphate pathway involved in terpenoid biosynthetic process"/>
    <property type="evidence" value="ECO:0007669"/>
    <property type="project" value="TreeGrafter"/>
</dbReference>
<dbReference type="FunFam" id="3.40.50.720:FF:000183">
    <property type="entry name" value="1-deoxy-D-xylulose 5-phosphate reductoisomerase, chloroplastic"/>
    <property type="match status" value="1"/>
</dbReference>
<dbReference type="Gene3D" id="1.10.1740.10">
    <property type="match status" value="1"/>
</dbReference>
<dbReference type="Gene3D" id="3.40.50.720">
    <property type="entry name" value="NAD(P)-binding Rossmann-like Domain"/>
    <property type="match status" value="1"/>
</dbReference>
<dbReference type="HAMAP" id="MF_00183">
    <property type="entry name" value="DXP_reductoisom"/>
    <property type="match status" value="1"/>
</dbReference>
<dbReference type="InterPro" id="IPR003821">
    <property type="entry name" value="DXP_reductoisomerase"/>
</dbReference>
<dbReference type="InterPro" id="IPR013644">
    <property type="entry name" value="DXP_reductoisomerase_C"/>
</dbReference>
<dbReference type="InterPro" id="IPR013512">
    <property type="entry name" value="DXP_reductoisomerase_N"/>
</dbReference>
<dbReference type="InterPro" id="IPR026877">
    <property type="entry name" value="DXPR_C"/>
</dbReference>
<dbReference type="InterPro" id="IPR036169">
    <property type="entry name" value="DXPR_C_sf"/>
</dbReference>
<dbReference type="InterPro" id="IPR036291">
    <property type="entry name" value="NAD(P)-bd_dom_sf"/>
</dbReference>
<dbReference type="NCBIfam" id="TIGR00243">
    <property type="entry name" value="Dxr"/>
    <property type="match status" value="1"/>
</dbReference>
<dbReference type="NCBIfam" id="NF009114">
    <property type="entry name" value="PRK12464.1"/>
    <property type="match status" value="1"/>
</dbReference>
<dbReference type="PANTHER" id="PTHR30525">
    <property type="entry name" value="1-DEOXY-D-XYLULOSE 5-PHOSPHATE REDUCTOISOMERASE"/>
    <property type="match status" value="1"/>
</dbReference>
<dbReference type="PANTHER" id="PTHR30525:SF0">
    <property type="entry name" value="1-DEOXY-D-XYLULOSE 5-PHOSPHATE REDUCTOISOMERASE, CHLOROPLASTIC"/>
    <property type="match status" value="1"/>
</dbReference>
<dbReference type="Pfam" id="PF08436">
    <property type="entry name" value="DXP_redisom_C"/>
    <property type="match status" value="1"/>
</dbReference>
<dbReference type="Pfam" id="PF02670">
    <property type="entry name" value="DXP_reductoisom"/>
    <property type="match status" value="1"/>
</dbReference>
<dbReference type="Pfam" id="PF13288">
    <property type="entry name" value="DXPR_C"/>
    <property type="match status" value="1"/>
</dbReference>
<dbReference type="PIRSF" id="PIRSF006205">
    <property type="entry name" value="Dxp_reductismrs"/>
    <property type="match status" value="1"/>
</dbReference>
<dbReference type="SUPFAM" id="SSF69055">
    <property type="entry name" value="1-deoxy-D-xylulose-5-phosphate reductoisomerase, C-terminal domain"/>
    <property type="match status" value="1"/>
</dbReference>
<dbReference type="SUPFAM" id="SSF55347">
    <property type="entry name" value="Glyceraldehyde-3-phosphate dehydrogenase-like, C-terminal domain"/>
    <property type="match status" value="1"/>
</dbReference>
<dbReference type="SUPFAM" id="SSF51735">
    <property type="entry name" value="NAD(P)-binding Rossmann-fold domains"/>
    <property type="match status" value="1"/>
</dbReference>
<gene>
    <name evidence="1" type="primary">dxr</name>
    <name type="ordered locus">Npun_R5970</name>
</gene>
<reference key="1">
    <citation type="journal article" date="2013" name="Plant Physiol.">
        <title>A Nostoc punctiforme Sugar Transporter Necessary to Establish a Cyanobacterium-Plant Symbiosis.</title>
        <authorList>
            <person name="Ekman M."/>
            <person name="Picossi S."/>
            <person name="Campbell E.L."/>
            <person name="Meeks J.C."/>
            <person name="Flores E."/>
        </authorList>
    </citation>
    <scope>NUCLEOTIDE SEQUENCE [LARGE SCALE GENOMIC DNA]</scope>
    <source>
        <strain>ATCC 29133 / PCC 73102</strain>
    </source>
</reference>
<protein>
    <recommendedName>
        <fullName evidence="1">1-deoxy-D-xylulose 5-phosphate reductoisomerase</fullName>
        <shortName evidence="1">DXP reductoisomerase</shortName>
        <ecNumber evidence="1">1.1.1.267</ecNumber>
    </recommendedName>
    <alternativeName>
        <fullName evidence="1">1-deoxyxylulose-5-phosphate reductoisomerase</fullName>
    </alternativeName>
    <alternativeName>
        <fullName evidence="1">2-C-methyl-D-erythritol 4-phosphate synthase</fullName>
    </alternativeName>
</protein>
<comment type="function">
    <text evidence="1">Catalyzes the NADPH-dependent rearrangement and reduction of 1-deoxy-D-xylulose-5-phosphate (DXP) to 2-C-methyl-D-erythritol 4-phosphate (MEP).</text>
</comment>
<comment type="catalytic activity">
    <reaction evidence="1">
        <text>2-C-methyl-D-erythritol 4-phosphate + NADP(+) = 1-deoxy-D-xylulose 5-phosphate + NADPH + H(+)</text>
        <dbReference type="Rhea" id="RHEA:13717"/>
        <dbReference type="ChEBI" id="CHEBI:15378"/>
        <dbReference type="ChEBI" id="CHEBI:57783"/>
        <dbReference type="ChEBI" id="CHEBI:57792"/>
        <dbReference type="ChEBI" id="CHEBI:58262"/>
        <dbReference type="ChEBI" id="CHEBI:58349"/>
        <dbReference type="EC" id="1.1.1.267"/>
    </reaction>
    <physiologicalReaction direction="right-to-left" evidence="1">
        <dbReference type="Rhea" id="RHEA:13719"/>
    </physiologicalReaction>
</comment>
<comment type="cofactor">
    <cofactor evidence="1">
        <name>Mg(2+)</name>
        <dbReference type="ChEBI" id="CHEBI:18420"/>
    </cofactor>
    <cofactor evidence="1">
        <name>Mn(2+)</name>
        <dbReference type="ChEBI" id="CHEBI:29035"/>
    </cofactor>
</comment>
<comment type="pathway">
    <text evidence="1">Isoprenoid biosynthesis; isopentenyl diphosphate biosynthesis via DXP pathway; isopentenyl diphosphate from 1-deoxy-D-xylulose 5-phosphate: step 1/6.</text>
</comment>
<comment type="similarity">
    <text evidence="1">Belongs to the DXR family.</text>
</comment>